<sequence length="356" mass="38594">MTIRALVVDDSALIRKVLSDILNEDPKIRVVGTAVNGKDGLEKVIKLRPDVVLLDNVMPVLDGLKTLARIMKEQPTPVVIVSALGERAEEITLTAFEYGAVDVIEKPSGILSQSMPEMAEEICRKVRTAPKANLKNLECMRDSEPLNPEKRETKENRVLKKAAPRNILAIGASTGGPRALEKLICSLPAELPAAVLVVQHMPPGFTASLSKRLDSKSALRVKEAQEGDRVEDGTVLIAPGNYHMEIVRNKVNSLEEETIHLSCGPKELGSRPSVNVLFRSIASVYGSRVISLVLTGMNCDGADGAEEIKKMGGKVIAEARSSCVVYGMPGEIVRRNLADLVLPLDKMAEEIIRIIG</sequence>
<dbReference type="EC" id="3.1.1.61" evidence="1"/>
<dbReference type="EC" id="3.5.1.44" evidence="1"/>
<dbReference type="EMBL" id="AE010299">
    <property type="protein sequence ID" value="AAM03469.1"/>
    <property type="molecule type" value="Genomic_DNA"/>
</dbReference>
<dbReference type="RefSeq" id="WP_011020074.1">
    <property type="nucleotide sequence ID" value="NC_003552.1"/>
</dbReference>
<dbReference type="SMR" id="Q8TUQ0"/>
<dbReference type="STRING" id="188937.MA_0015"/>
<dbReference type="EnsemblBacteria" id="AAM03469">
    <property type="protein sequence ID" value="AAM03469"/>
    <property type="gene ID" value="MA_0015"/>
</dbReference>
<dbReference type="GeneID" id="1471907"/>
<dbReference type="KEGG" id="mac:MA_0015"/>
<dbReference type="HOGENOM" id="CLU_000445_51_0_2"/>
<dbReference type="InParanoid" id="Q8TUQ0"/>
<dbReference type="OrthoDB" id="2857at2157"/>
<dbReference type="PhylomeDB" id="Q8TUQ0"/>
<dbReference type="Proteomes" id="UP000002487">
    <property type="component" value="Chromosome"/>
</dbReference>
<dbReference type="GO" id="GO:0005737">
    <property type="term" value="C:cytoplasm"/>
    <property type="evidence" value="ECO:0007669"/>
    <property type="project" value="UniProtKB-SubCell"/>
</dbReference>
<dbReference type="GO" id="GO:0000156">
    <property type="term" value="F:phosphorelay response regulator activity"/>
    <property type="evidence" value="ECO:0007669"/>
    <property type="project" value="InterPro"/>
</dbReference>
<dbReference type="GO" id="GO:0008984">
    <property type="term" value="F:protein-glutamate methylesterase activity"/>
    <property type="evidence" value="ECO:0007669"/>
    <property type="project" value="UniProtKB-UniRule"/>
</dbReference>
<dbReference type="GO" id="GO:0050568">
    <property type="term" value="F:protein-glutamine glutaminase activity"/>
    <property type="evidence" value="ECO:0007669"/>
    <property type="project" value="UniProtKB-UniRule"/>
</dbReference>
<dbReference type="GO" id="GO:0006935">
    <property type="term" value="P:chemotaxis"/>
    <property type="evidence" value="ECO:0007669"/>
    <property type="project" value="UniProtKB-UniRule"/>
</dbReference>
<dbReference type="CDD" id="cd16432">
    <property type="entry name" value="CheB_Rec"/>
    <property type="match status" value="1"/>
</dbReference>
<dbReference type="CDD" id="cd17541">
    <property type="entry name" value="REC_CheB-like"/>
    <property type="match status" value="1"/>
</dbReference>
<dbReference type="Gene3D" id="3.40.50.2300">
    <property type="match status" value="1"/>
</dbReference>
<dbReference type="Gene3D" id="3.40.50.180">
    <property type="entry name" value="Methylesterase CheB, C-terminal domain"/>
    <property type="match status" value="1"/>
</dbReference>
<dbReference type="HAMAP" id="MF_00099">
    <property type="entry name" value="CheB_chemtxs"/>
    <property type="match status" value="1"/>
</dbReference>
<dbReference type="InterPro" id="IPR008248">
    <property type="entry name" value="CheB-like"/>
</dbReference>
<dbReference type="InterPro" id="IPR035909">
    <property type="entry name" value="CheB_C"/>
</dbReference>
<dbReference type="InterPro" id="IPR011006">
    <property type="entry name" value="CheY-like_superfamily"/>
</dbReference>
<dbReference type="InterPro" id="IPR000673">
    <property type="entry name" value="Sig_transdc_resp-reg_Me-estase"/>
</dbReference>
<dbReference type="InterPro" id="IPR001789">
    <property type="entry name" value="Sig_transdc_resp-reg_receiver"/>
</dbReference>
<dbReference type="NCBIfam" id="NF001965">
    <property type="entry name" value="PRK00742.1"/>
    <property type="match status" value="1"/>
</dbReference>
<dbReference type="PANTHER" id="PTHR42872">
    <property type="entry name" value="PROTEIN-GLUTAMATE METHYLESTERASE/PROTEIN-GLUTAMINE GLUTAMINASE"/>
    <property type="match status" value="1"/>
</dbReference>
<dbReference type="PANTHER" id="PTHR42872:SF6">
    <property type="entry name" value="PROTEIN-GLUTAMATE METHYLESTERASE_PROTEIN-GLUTAMINE GLUTAMINASE"/>
    <property type="match status" value="1"/>
</dbReference>
<dbReference type="Pfam" id="PF01339">
    <property type="entry name" value="CheB_methylest"/>
    <property type="match status" value="1"/>
</dbReference>
<dbReference type="Pfam" id="PF00072">
    <property type="entry name" value="Response_reg"/>
    <property type="match status" value="1"/>
</dbReference>
<dbReference type="PIRSF" id="PIRSF000876">
    <property type="entry name" value="RR_chemtxs_CheB"/>
    <property type="match status" value="1"/>
</dbReference>
<dbReference type="SMART" id="SM00448">
    <property type="entry name" value="REC"/>
    <property type="match status" value="1"/>
</dbReference>
<dbReference type="SUPFAM" id="SSF52172">
    <property type="entry name" value="CheY-like"/>
    <property type="match status" value="1"/>
</dbReference>
<dbReference type="SUPFAM" id="SSF52738">
    <property type="entry name" value="Methylesterase CheB, C-terminal domain"/>
    <property type="match status" value="1"/>
</dbReference>
<dbReference type="PROSITE" id="PS50122">
    <property type="entry name" value="CHEB"/>
    <property type="match status" value="1"/>
</dbReference>
<dbReference type="PROSITE" id="PS50110">
    <property type="entry name" value="RESPONSE_REGULATORY"/>
    <property type="match status" value="1"/>
</dbReference>
<gene>
    <name evidence="1" type="primary">cheB2</name>
    <name type="ordered locus">MA_0015</name>
</gene>
<reference key="1">
    <citation type="journal article" date="2002" name="Genome Res.">
        <title>The genome of Methanosarcina acetivorans reveals extensive metabolic and physiological diversity.</title>
        <authorList>
            <person name="Galagan J.E."/>
            <person name="Nusbaum C."/>
            <person name="Roy A."/>
            <person name="Endrizzi M.G."/>
            <person name="Macdonald P."/>
            <person name="FitzHugh W."/>
            <person name="Calvo S."/>
            <person name="Engels R."/>
            <person name="Smirnov S."/>
            <person name="Atnoor D."/>
            <person name="Brown A."/>
            <person name="Allen N."/>
            <person name="Naylor J."/>
            <person name="Stange-Thomann N."/>
            <person name="DeArellano K."/>
            <person name="Johnson R."/>
            <person name="Linton L."/>
            <person name="McEwan P."/>
            <person name="McKernan K."/>
            <person name="Talamas J."/>
            <person name="Tirrell A."/>
            <person name="Ye W."/>
            <person name="Zimmer A."/>
            <person name="Barber R.D."/>
            <person name="Cann I."/>
            <person name="Graham D.E."/>
            <person name="Grahame D.A."/>
            <person name="Guss A.M."/>
            <person name="Hedderich R."/>
            <person name="Ingram-Smith C."/>
            <person name="Kuettner H.C."/>
            <person name="Krzycki J.A."/>
            <person name="Leigh J.A."/>
            <person name="Li W."/>
            <person name="Liu J."/>
            <person name="Mukhopadhyay B."/>
            <person name="Reeve J.N."/>
            <person name="Smith K."/>
            <person name="Springer T.A."/>
            <person name="Umayam L.A."/>
            <person name="White O."/>
            <person name="White R.H."/>
            <person name="de Macario E.C."/>
            <person name="Ferry J.G."/>
            <person name="Jarrell K.F."/>
            <person name="Jing H."/>
            <person name="Macario A.J.L."/>
            <person name="Paulsen I.T."/>
            <person name="Pritchett M."/>
            <person name="Sowers K.R."/>
            <person name="Swanson R.V."/>
            <person name="Zinder S.H."/>
            <person name="Lander E."/>
            <person name="Metcalf W.W."/>
            <person name="Birren B."/>
        </authorList>
    </citation>
    <scope>NUCLEOTIDE SEQUENCE [LARGE SCALE GENOMIC DNA]</scope>
    <source>
        <strain>ATCC 35395 / DSM 2834 / JCM 12185 / C2A</strain>
    </source>
</reference>
<keyword id="KW-0145">Chemotaxis</keyword>
<keyword id="KW-0963">Cytoplasm</keyword>
<keyword id="KW-0378">Hydrolase</keyword>
<keyword id="KW-0597">Phosphoprotein</keyword>
<keyword id="KW-1185">Reference proteome</keyword>
<accession>Q8TUQ0</accession>
<proteinExistence type="inferred from homology"/>
<protein>
    <recommendedName>
        <fullName evidence="1">Protein-glutamate methylesterase/protein-glutamine glutaminase 2</fullName>
        <ecNumber evidence="1">3.1.1.61</ecNumber>
        <ecNumber evidence="1">3.5.1.44</ecNumber>
    </recommendedName>
</protein>
<evidence type="ECO:0000255" key="1">
    <source>
        <dbReference type="HAMAP-Rule" id="MF_00099"/>
    </source>
</evidence>
<name>CHEB2_METAC</name>
<feature type="chain" id="PRO_0000158052" description="Protein-glutamate methylesterase/protein-glutamine glutaminase 2">
    <location>
        <begin position="1"/>
        <end position="356"/>
    </location>
</feature>
<feature type="domain" description="Response regulatory" evidence="1">
    <location>
        <begin position="4"/>
        <end position="121"/>
    </location>
</feature>
<feature type="domain" description="CheB-type methylesterase" evidence="1">
    <location>
        <begin position="161"/>
        <end position="356"/>
    </location>
</feature>
<feature type="active site" evidence="1">
    <location>
        <position position="173"/>
    </location>
</feature>
<feature type="active site" evidence="1">
    <location>
        <position position="200"/>
    </location>
</feature>
<feature type="active site" evidence="1">
    <location>
        <position position="300"/>
    </location>
</feature>
<feature type="modified residue" description="4-aspartylphosphate" evidence="1">
    <location>
        <position position="55"/>
    </location>
</feature>
<comment type="function">
    <text evidence="1">Involved in chemotaxis. Part of a chemotaxis signal transduction system that modulates chemotaxis in response to various stimuli. Catalyzes the demethylation of specific methylglutamate residues introduced into the chemoreceptors (methyl-accepting chemotaxis proteins or MCP) by CheR. Also mediates the irreversible deamidation of specific glutamine residues to glutamic acid.</text>
</comment>
<comment type="catalytic activity">
    <reaction evidence="1">
        <text>[protein]-L-glutamate 5-O-methyl ester + H2O = L-glutamyl-[protein] + methanol + H(+)</text>
        <dbReference type="Rhea" id="RHEA:23236"/>
        <dbReference type="Rhea" id="RHEA-COMP:10208"/>
        <dbReference type="Rhea" id="RHEA-COMP:10311"/>
        <dbReference type="ChEBI" id="CHEBI:15377"/>
        <dbReference type="ChEBI" id="CHEBI:15378"/>
        <dbReference type="ChEBI" id="CHEBI:17790"/>
        <dbReference type="ChEBI" id="CHEBI:29973"/>
        <dbReference type="ChEBI" id="CHEBI:82795"/>
        <dbReference type="EC" id="3.1.1.61"/>
    </reaction>
</comment>
<comment type="catalytic activity">
    <reaction evidence="1">
        <text>L-glutaminyl-[protein] + H2O = L-glutamyl-[protein] + NH4(+)</text>
        <dbReference type="Rhea" id="RHEA:16441"/>
        <dbReference type="Rhea" id="RHEA-COMP:10207"/>
        <dbReference type="Rhea" id="RHEA-COMP:10208"/>
        <dbReference type="ChEBI" id="CHEBI:15377"/>
        <dbReference type="ChEBI" id="CHEBI:28938"/>
        <dbReference type="ChEBI" id="CHEBI:29973"/>
        <dbReference type="ChEBI" id="CHEBI:30011"/>
        <dbReference type="EC" id="3.5.1.44"/>
    </reaction>
</comment>
<comment type="subcellular location">
    <subcellularLocation>
        <location evidence="1">Cytoplasm</location>
    </subcellularLocation>
</comment>
<comment type="domain">
    <text evidence="1">Contains a C-terminal catalytic domain, and an N-terminal region which modulates catalytic activity.</text>
</comment>
<comment type="PTM">
    <text evidence="1">Phosphorylated by CheA. Phosphorylation of the N-terminal regulatory domain activates the methylesterase activity.</text>
</comment>
<comment type="similarity">
    <text evidence="1">Belongs to the CheB family.</text>
</comment>
<organism>
    <name type="scientific">Methanosarcina acetivorans (strain ATCC 35395 / DSM 2834 / JCM 12185 / C2A)</name>
    <dbReference type="NCBI Taxonomy" id="188937"/>
    <lineage>
        <taxon>Archaea</taxon>
        <taxon>Methanobacteriati</taxon>
        <taxon>Methanobacteriota</taxon>
        <taxon>Stenosarchaea group</taxon>
        <taxon>Methanomicrobia</taxon>
        <taxon>Methanosarcinales</taxon>
        <taxon>Methanosarcinaceae</taxon>
        <taxon>Methanosarcina</taxon>
    </lineage>
</organism>